<reference key="1">
    <citation type="journal article" date="2005" name="Nature">
        <title>The genome of the social amoeba Dictyostelium discoideum.</title>
        <authorList>
            <person name="Eichinger L."/>
            <person name="Pachebat J.A."/>
            <person name="Gloeckner G."/>
            <person name="Rajandream M.A."/>
            <person name="Sucgang R."/>
            <person name="Berriman M."/>
            <person name="Song J."/>
            <person name="Olsen R."/>
            <person name="Szafranski K."/>
            <person name="Xu Q."/>
            <person name="Tunggal B."/>
            <person name="Kummerfeld S."/>
            <person name="Madera M."/>
            <person name="Konfortov B.A."/>
            <person name="Rivero F."/>
            <person name="Bankier A.T."/>
            <person name="Lehmann R."/>
            <person name="Hamlin N."/>
            <person name="Davies R."/>
            <person name="Gaudet P."/>
            <person name="Fey P."/>
            <person name="Pilcher K."/>
            <person name="Chen G."/>
            <person name="Saunders D."/>
            <person name="Sodergren E.J."/>
            <person name="Davis P."/>
            <person name="Kerhornou A."/>
            <person name="Nie X."/>
            <person name="Hall N."/>
            <person name="Anjard C."/>
            <person name="Hemphill L."/>
            <person name="Bason N."/>
            <person name="Farbrother P."/>
            <person name="Desany B."/>
            <person name="Just E."/>
            <person name="Morio T."/>
            <person name="Rost R."/>
            <person name="Churcher C.M."/>
            <person name="Cooper J."/>
            <person name="Haydock S."/>
            <person name="van Driessche N."/>
            <person name="Cronin A."/>
            <person name="Goodhead I."/>
            <person name="Muzny D.M."/>
            <person name="Mourier T."/>
            <person name="Pain A."/>
            <person name="Lu M."/>
            <person name="Harper D."/>
            <person name="Lindsay R."/>
            <person name="Hauser H."/>
            <person name="James K.D."/>
            <person name="Quiles M."/>
            <person name="Madan Babu M."/>
            <person name="Saito T."/>
            <person name="Buchrieser C."/>
            <person name="Wardroper A."/>
            <person name="Felder M."/>
            <person name="Thangavelu M."/>
            <person name="Johnson D."/>
            <person name="Knights A."/>
            <person name="Loulseged H."/>
            <person name="Mungall K.L."/>
            <person name="Oliver K."/>
            <person name="Price C."/>
            <person name="Quail M.A."/>
            <person name="Urushihara H."/>
            <person name="Hernandez J."/>
            <person name="Rabbinowitsch E."/>
            <person name="Steffen D."/>
            <person name="Sanders M."/>
            <person name="Ma J."/>
            <person name="Kohara Y."/>
            <person name="Sharp S."/>
            <person name="Simmonds M.N."/>
            <person name="Spiegler S."/>
            <person name="Tivey A."/>
            <person name="Sugano S."/>
            <person name="White B."/>
            <person name="Walker D."/>
            <person name="Woodward J.R."/>
            <person name="Winckler T."/>
            <person name="Tanaka Y."/>
            <person name="Shaulsky G."/>
            <person name="Schleicher M."/>
            <person name="Weinstock G.M."/>
            <person name="Rosenthal A."/>
            <person name="Cox E.C."/>
            <person name="Chisholm R.L."/>
            <person name="Gibbs R.A."/>
            <person name="Loomis W.F."/>
            <person name="Platzer M."/>
            <person name="Kay R.R."/>
            <person name="Williams J.G."/>
            <person name="Dear P.H."/>
            <person name="Noegel A.A."/>
            <person name="Barrell B.G."/>
            <person name="Kuspa A."/>
        </authorList>
    </citation>
    <scope>NUCLEOTIDE SEQUENCE [LARGE SCALE GENOMIC DNA]</scope>
    <source>
        <strain>AX4</strain>
    </source>
</reference>
<name>MAK16_DICDI</name>
<dbReference type="EMBL" id="AAFI02000005">
    <property type="protein sequence ID" value="EAL72171.1"/>
    <property type="molecule type" value="Genomic_DNA"/>
</dbReference>
<dbReference type="RefSeq" id="XP_646138.1">
    <property type="nucleotide sequence ID" value="XM_641046.1"/>
</dbReference>
<dbReference type="SMR" id="Q55DJ3"/>
<dbReference type="FunCoup" id="Q55DJ3">
    <property type="interactions" value="717"/>
</dbReference>
<dbReference type="STRING" id="44689.Q55DJ3"/>
<dbReference type="PaxDb" id="44689-DDB0235209"/>
<dbReference type="EnsemblProtists" id="EAL72171">
    <property type="protein sequence ID" value="EAL72171"/>
    <property type="gene ID" value="DDB_G0269642"/>
</dbReference>
<dbReference type="GeneID" id="8617088"/>
<dbReference type="KEGG" id="ddi:DDB_G0269642"/>
<dbReference type="dictyBase" id="DDB_G0269642">
    <property type="gene designation" value="mak16l"/>
</dbReference>
<dbReference type="VEuPathDB" id="AmoebaDB:DDB_G0269642"/>
<dbReference type="eggNOG" id="KOG3064">
    <property type="taxonomic scope" value="Eukaryota"/>
</dbReference>
<dbReference type="HOGENOM" id="CLU_050888_0_1_1"/>
<dbReference type="InParanoid" id="Q55DJ3"/>
<dbReference type="OMA" id="DKGQNFC"/>
<dbReference type="PhylomeDB" id="Q55DJ3"/>
<dbReference type="PRO" id="PR:Q55DJ3"/>
<dbReference type="Proteomes" id="UP000002195">
    <property type="component" value="Chromosome 1"/>
</dbReference>
<dbReference type="GO" id="GO:0005730">
    <property type="term" value="C:nucleolus"/>
    <property type="evidence" value="ECO:0000250"/>
    <property type="project" value="dictyBase"/>
</dbReference>
<dbReference type="GO" id="GO:0030687">
    <property type="term" value="C:preribosome, large subunit precursor"/>
    <property type="evidence" value="ECO:0000318"/>
    <property type="project" value="GO_Central"/>
</dbReference>
<dbReference type="GO" id="GO:0000460">
    <property type="term" value="P:maturation of 5.8S rRNA"/>
    <property type="evidence" value="ECO:0000318"/>
    <property type="project" value="GO_Central"/>
</dbReference>
<dbReference type="GO" id="GO:0000470">
    <property type="term" value="P:maturation of LSU-rRNA"/>
    <property type="evidence" value="ECO:0000318"/>
    <property type="project" value="GO_Central"/>
</dbReference>
<dbReference type="GO" id="GO:0042273">
    <property type="term" value="P:ribosomal large subunit biogenesis"/>
    <property type="evidence" value="ECO:0000250"/>
    <property type="project" value="dictyBase"/>
</dbReference>
<dbReference type="FunFam" id="3.30.390.110:FF:000001">
    <property type="entry name" value="Protein MAK16 homolog"/>
    <property type="match status" value="1"/>
</dbReference>
<dbReference type="Gene3D" id="3.30.390.110">
    <property type="match status" value="1"/>
</dbReference>
<dbReference type="InterPro" id="IPR006958">
    <property type="entry name" value="Mak16"/>
</dbReference>
<dbReference type="InterPro" id="IPR029004">
    <property type="entry name" value="Ribosomal_eL28/Mak16"/>
</dbReference>
<dbReference type="PANTHER" id="PTHR23405">
    <property type="entry name" value="MAINTENANCE OF KILLER 16 MAK16 PROTEIN-RELATED"/>
    <property type="match status" value="1"/>
</dbReference>
<dbReference type="PANTHER" id="PTHR23405:SF4">
    <property type="entry name" value="PROTEIN MAK16 HOMOLOG"/>
    <property type="match status" value="1"/>
</dbReference>
<dbReference type="Pfam" id="PF04874">
    <property type="entry name" value="Mak16"/>
    <property type="match status" value="1"/>
</dbReference>
<dbReference type="Pfam" id="PF01778">
    <property type="entry name" value="Ribosomal_L28e"/>
    <property type="match status" value="1"/>
</dbReference>
<dbReference type="PIRSF" id="PIRSF003352">
    <property type="entry name" value="MAK16"/>
    <property type="match status" value="1"/>
</dbReference>
<feature type="chain" id="PRO_0000328353" description="Protein MAK16 homolog">
    <location>
        <begin position="1"/>
        <end position="309"/>
    </location>
</feature>
<feature type="region of interest" description="Disordered" evidence="2">
    <location>
        <begin position="194"/>
        <end position="309"/>
    </location>
</feature>
<feature type="compositionally biased region" description="Acidic residues" evidence="2">
    <location>
        <begin position="195"/>
        <end position="227"/>
    </location>
</feature>
<feature type="compositionally biased region" description="Acidic residues" evidence="2">
    <location>
        <begin position="235"/>
        <end position="270"/>
    </location>
</feature>
<feature type="compositionally biased region" description="Basic residues" evidence="2">
    <location>
        <begin position="275"/>
        <end position="293"/>
    </location>
</feature>
<feature type="compositionally biased region" description="Acidic residues" evidence="2">
    <location>
        <begin position="299"/>
        <end position="309"/>
    </location>
</feature>
<protein>
    <recommendedName>
        <fullName>Protein MAK16 homolog</fullName>
    </recommendedName>
    <alternativeName>
        <fullName>MAK16-like protein</fullName>
    </alternativeName>
</protein>
<gene>
    <name type="primary">mak16l</name>
    <name type="synonym">mak16</name>
    <name type="ORF">DDB_G0269642</name>
</gene>
<evidence type="ECO:0000250" key="1"/>
<evidence type="ECO:0000256" key="2">
    <source>
        <dbReference type="SAM" id="MobiDB-lite"/>
    </source>
</evidence>
<evidence type="ECO:0000305" key="3"/>
<organism>
    <name type="scientific">Dictyostelium discoideum</name>
    <name type="common">Social amoeba</name>
    <dbReference type="NCBI Taxonomy" id="44689"/>
    <lineage>
        <taxon>Eukaryota</taxon>
        <taxon>Amoebozoa</taxon>
        <taxon>Evosea</taxon>
        <taxon>Eumycetozoa</taxon>
        <taxon>Dictyostelia</taxon>
        <taxon>Dictyosteliales</taxon>
        <taxon>Dictyosteliaceae</taxon>
        <taxon>Dictyostelium</taxon>
    </lineage>
</organism>
<proteinExistence type="inferred from homology"/>
<sequence>MQSDDIIWDVINKNFCSFKTTFNKTKFCKNEYNVTGVCNKVSCPLANSRYATVREEEGVCYLYMKTVERAHTPNRLWEKIKLDPNFMKAIEQIDSHLEFWPGHMSHRVKQRYIRITQYLIRMRKMRKQIKRELVPIKKKAERRDATRENKALIAAHLTTNIKKELLERLNKGTYADMHYFPEDIINNVLEKEGEADQFSEEEADENEEEGEEEMEEEFEDDIDDIEDAGGAFEYVEGDDDEDDIDDEYENEPYQDDDEEDDDDDDDDDEEVKPQITKKRGPTFKPTKKTPQKRVHMEVEIEEETENQAN</sequence>
<comment type="subcellular location">
    <subcellularLocation>
        <location evidence="1">Nucleus</location>
        <location evidence="1">Nucleolus</location>
    </subcellularLocation>
</comment>
<comment type="similarity">
    <text evidence="3">Belongs to the MAK16 family.</text>
</comment>
<keyword id="KW-0539">Nucleus</keyword>
<keyword id="KW-1185">Reference proteome</keyword>
<accession>Q55DJ3</accession>